<sequence length="680" mass="78615">MIDRYKHQQLRIGLVSPQQISAWATKKIPNGEIVGEVTKPYTFHYKTNKPEKDGLFCERIFGPIKSGICACGNYRVIGDEKEDSKFCEQCGVEFIDSRIRRYQMGYIKLTCPVTHVWYLKRLPSYIANLLDKPLKELEGLVYCDFSFARPITKKPTFLRLRGSFEYEIQSWKYSLPLFFTTQGFDIFRNREISTGAGAIREQLADLDLRIIIENSLVEWKQLGEEGPTGNEWEDRKIVRRKDFLVRRMELAKHFIRTNIEPEWMILCLLPVLPPELRPIIQIEGGKLMSSDINELYRRVIYRNNTLTDLLTTSRSTPGELVMCQEKLVQEAVDTLLDNGIRGQPMRDGHNKVYKSFSDVIEGKEGRFRETLLGKRVDYSGRSVIVVGPSLSLHRCGLPREIAIELFQTFVIRGLIRQHLASNIGVAKSQIREKKPVVWEILQEVMQGHPVLLNRAPTLHRLGIQSFQPILVEGRTICLHPLVCKGFNADFDGDQMAVHVPLSLEAQAEARLLMFSHMNLLSPAIGDPISVPTQDMLIGLYVLTSGTRRGICANRYNPCNRKNSQNERIYETNYKYMKEPFFCNSYDAIGAYRQKRINLDSPLWLRWQLDQRVIASREVPIEVHYESFGNYHEIYAHYLIVRSVKKETFFIYIRTTVGHISFYREIEEAIQGFSQACSYDT</sequence>
<accession>A4QK09</accession>
<keyword id="KW-0150">Chloroplast</keyword>
<keyword id="KW-0240">DNA-directed RNA polymerase</keyword>
<keyword id="KW-0460">Magnesium</keyword>
<keyword id="KW-0479">Metal-binding</keyword>
<keyword id="KW-0548">Nucleotidyltransferase</keyword>
<keyword id="KW-0934">Plastid</keyword>
<keyword id="KW-0804">Transcription</keyword>
<keyword id="KW-0808">Transferase</keyword>
<keyword id="KW-0862">Zinc</keyword>
<protein>
    <recommendedName>
        <fullName evidence="1">DNA-directed RNA polymerase subunit beta'</fullName>
        <ecNumber evidence="1">2.7.7.6</ecNumber>
    </recommendedName>
    <alternativeName>
        <fullName evidence="1">PEP</fullName>
    </alternativeName>
    <alternativeName>
        <fullName evidence="1">Plastid-encoded RNA polymerase subunit beta'</fullName>
        <shortName evidence="1">RNA polymerase subunit beta'</shortName>
    </alternativeName>
</protein>
<dbReference type="EC" id="2.7.7.6" evidence="1"/>
<dbReference type="EMBL" id="AP009369">
    <property type="protein sequence ID" value="BAF50014.1"/>
    <property type="molecule type" value="Genomic_DNA"/>
</dbReference>
<dbReference type="RefSeq" id="YP_001123190.1">
    <property type="nucleotide sequence ID" value="NC_009268.1"/>
</dbReference>
<dbReference type="SMR" id="A4QK09"/>
<dbReference type="GeneID" id="4962566"/>
<dbReference type="GO" id="GO:0009507">
    <property type="term" value="C:chloroplast"/>
    <property type="evidence" value="ECO:0007669"/>
    <property type="project" value="UniProtKB-SubCell"/>
</dbReference>
<dbReference type="GO" id="GO:0000428">
    <property type="term" value="C:DNA-directed RNA polymerase complex"/>
    <property type="evidence" value="ECO:0007669"/>
    <property type="project" value="UniProtKB-KW"/>
</dbReference>
<dbReference type="GO" id="GO:0005739">
    <property type="term" value="C:mitochondrion"/>
    <property type="evidence" value="ECO:0007669"/>
    <property type="project" value="GOC"/>
</dbReference>
<dbReference type="GO" id="GO:0003677">
    <property type="term" value="F:DNA binding"/>
    <property type="evidence" value="ECO:0007669"/>
    <property type="project" value="UniProtKB-UniRule"/>
</dbReference>
<dbReference type="GO" id="GO:0003899">
    <property type="term" value="F:DNA-directed RNA polymerase activity"/>
    <property type="evidence" value="ECO:0007669"/>
    <property type="project" value="UniProtKB-UniRule"/>
</dbReference>
<dbReference type="GO" id="GO:0000287">
    <property type="term" value="F:magnesium ion binding"/>
    <property type="evidence" value="ECO:0007669"/>
    <property type="project" value="UniProtKB-UniRule"/>
</dbReference>
<dbReference type="GO" id="GO:0008270">
    <property type="term" value="F:zinc ion binding"/>
    <property type="evidence" value="ECO:0007669"/>
    <property type="project" value="UniProtKB-UniRule"/>
</dbReference>
<dbReference type="GO" id="GO:0006351">
    <property type="term" value="P:DNA-templated transcription"/>
    <property type="evidence" value="ECO:0007669"/>
    <property type="project" value="UniProtKB-UniRule"/>
</dbReference>
<dbReference type="FunFam" id="4.10.860.120:FF:000007">
    <property type="entry name" value="DNA-directed RNA polymerase subunit gamma"/>
    <property type="match status" value="1"/>
</dbReference>
<dbReference type="Gene3D" id="1.10.40.90">
    <property type="match status" value="1"/>
</dbReference>
<dbReference type="Gene3D" id="2.40.40.20">
    <property type="match status" value="1"/>
</dbReference>
<dbReference type="Gene3D" id="4.10.860.120">
    <property type="entry name" value="RNA polymerase II, clamp domain"/>
    <property type="match status" value="1"/>
</dbReference>
<dbReference type="Gene3D" id="1.10.274.100">
    <property type="entry name" value="RNA polymerase Rpb1, domain 3"/>
    <property type="match status" value="1"/>
</dbReference>
<dbReference type="HAMAP" id="MF_01323">
    <property type="entry name" value="RNApol_bact_RpoC1"/>
    <property type="match status" value="1"/>
</dbReference>
<dbReference type="InterPro" id="IPR045867">
    <property type="entry name" value="DNA-dir_RpoC_beta_prime"/>
</dbReference>
<dbReference type="InterPro" id="IPR000722">
    <property type="entry name" value="RNA_pol_asu"/>
</dbReference>
<dbReference type="InterPro" id="IPR006592">
    <property type="entry name" value="RNA_pol_N"/>
</dbReference>
<dbReference type="InterPro" id="IPR007080">
    <property type="entry name" value="RNA_pol_Rpb1_1"/>
</dbReference>
<dbReference type="InterPro" id="IPR042102">
    <property type="entry name" value="RNA_pol_Rpb1_3_sf"/>
</dbReference>
<dbReference type="InterPro" id="IPR044893">
    <property type="entry name" value="RNA_pol_Rpb1_clamp_domain"/>
</dbReference>
<dbReference type="InterPro" id="IPR034678">
    <property type="entry name" value="RNApol_RpoC1"/>
</dbReference>
<dbReference type="PANTHER" id="PTHR19376">
    <property type="entry name" value="DNA-DIRECTED RNA POLYMERASE"/>
    <property type="match status" value="1"/>
</dbReference>
<dbReference type="PANTHER" id="PTHR19376:SF54">
    <property type="entry name" value="DNA-DIRECTED RNA POLYMERASE SUBUNIT BETA"/>
    <property type="match status" value="1"/>
</dbReference>
<dbReference type="Pfam" id="PF04997">
    <property type="entry name" value="RNA_pol_Rpb1_1"/>
    <property type="match status" value="1"/>
</dbReference>
<dbReference type="Pfam" id="PF00623">
    <property type="entry name" value="RNA_pol_Rpb1_2"/>
    <property type="match status" value="2"/>
</dbReference>
<dbReference type="SMART" id="SM00663">
    <property type="entry name" value="RPOLA_N"/>
    <property type="match status" value="1"/>
</dbReference>
<dbReference type="SUPFAM" id="SSF64484">
    <property type="entry name" value="beta and beta-prime subunits of DNA dependent RNA-polymerase"/>
    <property type="match status" value="1"/>
</dbReference>
<geneLocation type="chloroplast"/>
<feature type="chain" id="PRO_0000353474" description="DNA-directed RNA polymerase subunit beta'">
    <location>
        <begin position="1"/>
        <end position="680"/>
    </location>
</feature>
<feature type="binding site" evidence="1">
    <location>
        <position position="69"/>
    </location>
    <ligand>
        <name>Zn(2+)</name>
        <dbReference type="ChEBI" id="CHEBI:29105"/>
    </ligand>
</feature>
<feature type="binding site" evidence="1">
    <location>
        <position position="71"/>
    </location>
    <ligand>
        <name>Zn(2+)</name>
        <dbReference type="ChEBI" id="CHEBI:29105"/>
    </ligand>
</feature>
<feature type="binding site" evidence="1">
    <location>
        <position position="87"/>
    </location>
    <ligand>
        <name>Zn(2+)</name>
        <dbReference type="ChEBI" id="CHEBI:29105"/>
    </ligand>
</feature>
<feature type="binding site" evidence="1">
    <location>
        <position position="90"/>
    </location>
    <ligand>
        <name>Zn(2+)</name>
        <dbReference type="ChEBI" id="CHEBI:29105"/>
    </ligand>
</feature>
<feature type="binding site" evidence="1">
    <location>
        <position position="489"/>
    </location>
    <ligand>
        <name>Mg(2+)</name>
        <dbReference type="ChEBI" id="CHEBI:18420"/>
    </ligand>
</feature>
<feature type="binding site" evidence="1">
    <location>
        <position position="491"/>
    </location>
    <ligand>
        <name>Mg(2+)</name>
        <dbReference type="ChEBI" id="CHEBI:18420"/>
    </ligand>
</feature>
<feature type="binding site" evidence="1">
    <location>
        <position position="493"/>
    </location>
    <ligand>
        <name>Mg(2+)</name>
        <dbReference type="ChEBI" id="CHEBI:18420"/>
    </ligand>
</feature>
<evidence type="ECO:0000255" key="1">
    <source>
        <dbReference type="HAMAP-Rule" id="MF_01323"/>
    </source>
</evidence>
<organism>
    <name type="scientific">Arabis hirsuta</name>
    <name type="common">Hairy rock-cress</name>
    <name type="synonym">Turritis hirsuta</name>
    <dbReference type="NCBI Taxonomy" id="78191"/>
    <lineage>
        <taxon>Eukaryota</taxon>
        <taxon>Viridiplantae</taxon>
        <taxon>Streptophyta</taxon>
        <taxon>Embryophyta</taxon>
        <taxon>Tracheophyta</taxon>
        <taxon>Spermatophyta</taxon>
        <taxon>Magnoliopsida</taxon>
        <taxon>eudicotyledons</taxon>
        <taxon>Gunneridae</taxon>
        <taxon>Pentapetalae</taxon>
        <taxon>rosids</taxon>
        <taxon>malvids</taxon>
        <taxon>Brassicales</taxon>
        <taxon>Brassicaceae</taxon>
        <taxon>Arabideae</taxon>
        <taxon>Arabis</taxon>
    </lineage>
</organism>
<proteinExistence type="inferred from homology"/>
<gene>
    <name evidence="1" type="primary">rpoC1</name>
</gene>
<reference key="1">
    <citation type="submission" date="2007-03" db="EMBL/GenBank/DDBJ databases">
        <title>Sequencing analysis of Arabis hirsuta chloroplast DNA.</title>
        <authorList>
            <person name="Hosouchi T."/>
            <person name="Tsuruoka H."/>
            <person name="Kotani H."/>
        </authorList>
    </citation>
    <scope>NUCLEOTIDE SEQUENCE [LARGE SCALE GENOMIC DNA]</scope>
</reference>
<comment type="function">
    <text evidence="1">DNA-dependent RNA polymerase catalyzes the transcription of DNA into RNA using the four ribonucleoside triphosphates as substrates.</text>
</comment>
<comment type="catalytic activity">
    <reaction evidence="1">
        <text>RNA(n) + a ribonucleoside 5'-triphosphate = RNA(n+1) + diphosphate</text>
        <dbReference type="Rhea" id="RHEA:21248"/>
        <dbReference type="Rhea" id="RHEA-COMP:14527"/>
        <dbReference type="Rhea" id="RHEA-COMP:17342"/>
        <dbReference type="ChEBI" id="CHEBI:33019"/>
        <dbReference type="ChEBI" id="CHEBI:61557"/>
        <dbReference type="ChEBI" id="CHEBI:140395"/>
        <dbReference type="EC" id="2.7.7.6"/>
    </reaction>
</comment>
<comment type="cofactor">
    <cofactor evidence="1">
        <name>Mg(2+)</name>
        <dbReference type="ChEBI" id="CHEBI:18420"/>
    </cofactor>
    <text evidence="1">Binds 1 Mg(2+) ion per subunit.</text>
</comment>
<comment type="cofactor">
    <cofactor evidence="1">
        <name>Zn(2+)</name>
        <dbReference type="ChEBI" id="CHEBI:29105"/>
    </cofactor>
    <text evidence="1">Binds 1 Zn(2+) ion per subunit.</text>
</comment>
<comment type="subunit">
    <text evidence="1">In plastids the minimal PEP RNA polymerase catalytic core is composed of four subunits: alpha, beta, beta', and beta''. When a (nuclear-encoded) sigma factor is associated with the core the holoenzyme is formed, which can initiate transcription.</text>
</comment>
<comment type="subcellular location">
    <subcellularLocation>
        <location evidence="1">Plastid</location>
        <location evidence="1">Chloroplast</location>
    </subcellularLocation>
</comment>
<comment type="similarity">
    <text evidence="1">Belongs to the RNA polymerase beta' chain family. RpoC1 subfamily.</text>
</comment>
<name>RPOC1_ARAHI</name>